<gene>
    <name type="primary">MED23</name>
    <name type="ORF">AAEL014021</name>
</gene>
<comment type="function">
    <text evidence="1">Component of the Mediator complex, a coactivator involved in the regulated transcription of nearly all RNA polymerase II-dependent genes. Mediator functions as a bridge to convey information from gene-specific regulatory proteins to the basal RNA polymerase II transcription machinery. Mediator is recruited to promoters by direct interactions with regulatory proteins and serves as a scaffold for the assembly of a functional preinitiation complex with RNA polymerase II and the general transcription factors (By similarity).</text>
</comment>
<comment type="subunit">
    <text evidence="1">Component of the Mediator complex.</text>
</comment>
<comment type="subcellular location">
    <subcellularLocation>
        <location evidence="3">Nucleus</location>
    </subcellularLocation>
</comment>
<comment type="similarity">
    <text evidence="3">Belongs to the Mediator complex subunit 23 family.</text>
</comment>
<feature type="chain" id="PRO_0000305936" description="Mediator of RNA polymerase II transcription subunit 23">
    <location>
        <begin position="1"/>
        <end position="1409"/>
    </location>
</feature>
<feature type="region of interest" description="Disordered" evidence="2">
    <location>
        <begin position="1359"/>
        <end position="1409"/>
    </location>
</feature>
<sequence>MSTDTQIIKLVEEILCEKTNDYDYEGPMPDEAELQKRAEDGMKKFATVFAGMSQEVKENALRSCLIHVAGINHRNKVRKHMQVLKDLVGKGIIPARLLCEQIMSSEKLVYQNQSFWIECFQVVRRVIGGVDYKGVREIMKCCKEKALSFPSGISSSILPQMLELTEVIEHIFNRNACLLPAYFIINEIQKADYQDTHWRIANLIANFIEEFVIVAQMLSIIGHSSMLPIVEHSSYADNLINPWKLDPTTLKLALRGNLPYEPELLQPQIKLLRFVLEQPYSRDMVCSMLNLQKTQKQKCMALEEQLVWLVMCAMECSEKEPVHTVDGEISSHTQWVWLHLSSQLIYFVLFQFATFQNIVNTLHDKLAVSNLRRGRDHLMWVLLQYISGSIQRNSITNFLPILKLYDSLYPEKEPLPVPDYNNPLCTHQMAPTCIWIHLLKRAQSEHYNINRSIPTALKLHHEFLQHLVMPNNNATLCMGSDYRLALLCNAYSTNPDYFSRPMAALIETILGNCKNPSAGGGSTSATQPLPTVPLSMSVLDSLTIHSKMSLIHSIVTHMIKQAQSKTTVPNTNNMAPALVETYSRLLVYTEIESLGIKGFLGQLLPQVFKSAAWGILYTLLEMFSYRMHHIQPHYRVQLLSHLHSLASVPHTNQMQLHSCVESTALRLITGLGSVEVQAQMSRYVTEQKAPGNIVSAESEELNRALILTLARSMQITGTGNDPQSTTWCKELLNSIMQNTPHTWSQHTLQCFPPVLNDLVVQHNVPKENKQLLKKSVDEEYRNWTSMSNENDIIGHFGTAGTPGTPPLFLCLLFKMIVETDTISPVAYKILERIGARALSAHLRKLCDYLVFEVSNSGDGAHVNKCVDTINDMIWKYNIITIDRLVLCLSLRTLEGNEAQVSFCIIQLLLLKTSEFRNRLQEFVSINSPEHWKQNNWHERHLAFHQKFPEKFTPDESVSHPSLPVYFGNVCLRFLPVLDITIHRYLEVPAAMSKTLDVLLDHLGPLYKFHDRPITYLYNTLHYYERMLRDRPQLKKRLVGTVIGSLKDVRPDNWAVTEQYQSYMSKKDDAVNWMPDLNYYIYLVRRMQDTIDGTNIFPGTDWRFNEFPNPPAHALYVTCVELLGLPVGPQGVANSLIDVVVKGYPVIPSQSVHNWINTIGLIMAALPESYWGVIYERLREVISCPQMTDWLHRQSPFELFNFKIVREAMLEKNYVVILAIAQSILHHSGIGQISTVTEHIKENFKPIIKTEYQLIYLCHLVGPFLNRLCAERSRAVSDITLILYELLEQVDKAQPSLALKYMDPICDLLYHIKYMFIGDMMKSDLEAIIRRLRPALQMRLRFITRLNVDEIGVDQQNVDASAAGQGPAQGGPQSQQPQTTGQAGGQPSVPQQQQQTQQQQPQQQQQVQQQ</sequence>
<organism>
    <name type="scientific">Aedes aegypti</name>
    <name type="common">Yellowfever mosquito</name>
    <name type="synonym">Culex aegypti</name>
    <dbReference type="NCBI Taxonomy" id="7159"/>
    <lineage>
        <taxon>Eukaryota</taxon>
        <taxon>Metazoa</taxon>
        <taxon>Ecdysozoa</taxon>
        <taxon>Arthropoda</taxon>
        <taxon>Hexapoda</taxon>
        <taxon>Insecta</taxon>
        <taxon>Pterygota</taxon>
        <taxon>Neoptera</taxon>
        <taxon>Endopterygota</taxon>
        <taxon>Diptera</taxon>
        <taxon>Nematocera</taxon>
        <taxon>Culicoidea</taxon>
        <taxon>Culicidae</taxon>
        <taxon>Culicinae</taxon>
        <taxon>Aedini</taxon>
        <taxon>Aedes</taxon>
        <taxon>Stegomyia</taxon>
    </lineage>
</organism>
<accession>Q16HH9</accession>
<protein>
    <recommendedName>
        <fullName>Mediator of RNA polymerase II transcription subunit 23</fullName>
    </recommendedName>
    <alternativeName>
        <fullName>Mediator complex subunit 23</fullName>
    </alternativeName>
</protein>
<reference key="1">
    <citation type="journal article" date="2007" name="Science">
        <title>Genome sequence of Aedes aegypti, a major arbovirus vector.</title>
        <authorList>
            <person name="Nene V."/>
            <person name="Wortman J.R."/>
            <person name="Lawson D."/>
            <person name="Haas B.J."/>
            <person name="Kodira C.D."/>
            <person name="Tu Z.J."/>
            <person name="Loftus B.J."/>
            <person name="Xi Z."/>
            <person name="Megy K."/>
            <person name="Grabherr M."/>
            <person name="Ren Q."/>
            <person name="Zdobnov E.M."/>
            <person name="Lobo N.F."/>
            <person name="Campbell K.S."/>
            <person name="Brown S.E."/>
            <person name="Bonaldo M.F."/>
            <person name="Zhu J."/>
            <person name="Sinkins S.P."/>
            <person name="Hogenkamp D.G."/>
            <person name="Amedeo P."/>
            <person name="Arensburger P."/>
            <person name="Atkinson P.W."/>
            <person name="Bidwell S.L."/>
            <person name="Biedler J."/>
            <person name="Birney E."/>
            <person name="Bruggner R.V."/>
            <person name="Costas J."/>
            <person name="Coy M.R."/>
            <person name="Crabtree J."/>
            <person name="Crawford M."/>
            <person name="DeBruyn B."/>
            <person name="DeCaprio D."/>
            <person name="Eiglmeier K."/>
            <person name="Eisenstadt E."/>
            <person name="El-Dorry H."/>
            <person name="Gelbart W.M."/>
            <person name="Gomes S.L."/>
            <person name="Hammond M."/>
            <person name="Hannick L.I."/>
            <person name="Hogan J.R."/>
            <person name="Holmes M.H."/>
            <person name="Jaffe D."/>
            <person name="Johnston S.J."/>
            <person name="Kennedy R.C."/>
            <person name="Koo H."/>
            <person name="Kravitz S."/>
            <person name="Kriventseva E.V."/>
            <person name="Kulp D."/>
            <person name="Labutti K."/>
            <person name="Lee E."/>
            <person name="Li S."/>
            <person name="Lovin D.D."/>
            <person name="Mao C."/>
            <person name="Mauceli E."/>
            <person name="Menck C.F."/>
            <person name="Miller J.R."/>
            <person name="Montgomery P."/>
            <person name="Mori A."/>
            <person name="Nascimento A.L."/>
            <person name="Naveira H.F."/>
            <person name="Nusbaum C."/>
            <person name="O'Leary S.B."/>
            <person name="Orvis J."/>
            <person name="Pertea M."/>
            <person name="Quesneville H."/>
            <person name="Reidenbach K.R."/>
            <person name="Rogers Y.-H.C."/>
            <person name="Roth C.W."/>
            <person name="Schneider J.R."/>
            <person name="Schatz M."/>
            <person name="Shumway M."/>
            <person name="Stanke M."/>
            <person name="Stinson E.O."/>
            <person name="Tubio J.M.C."/>
            <person name="Vanzee J.P."/>
            <person name="Verjovski-Almeida S."/>
            <person name="Werner D."/>
            <person name="White O.R."/>
            <person name="Wyder S."/>
            <person name="Zeng Q."/>
            <person name="Zhao Q."/>
            <person name="Zhao Y."/>
            <person name="Hill C.A."/>
            <person name="Raikhel A.S."/>
            <person name="Soares M.B."/>
            <person name="Knudson D.L."/>
            <person name="Lee N.H."/>
            <person name="Galagan J."/>
            <person name="Salzberg S.L."/>
            <person name="Paulsen I.T."/>
            <person name="Dimopoulos G."/>
            <person name="Collins F.H."/>
            <person name="Bruce B."/>
            <person name="Fraser-Liggett C.M."/>
            <person name="Severson D.W."/>
        </authorList>
    </citation>
    <scope>NUCLEOTIDE SEQUENCE [LARGE SCALE GENOMIC DNA]</scope>
    <source>
        <strain>LVPib12</strain>
    </source>
</reference>
<evidence type="ECO:0000250" key="1"/>
<evidence type="ECO:0000256" key="2">
    <source>
        <dbReference type="SAM" id="MobiDB-lite"/>
    </source>
</evidence>
<evidence type="ECO:0000305" key="3"/>
<keyword id="KW-0010">Activator</keyword>
<keyword id="KW-0539">Nucleus</keyword>
<keyword id="KW-1185">Reference proteome</keyword>
<keyword id="KW-0804">Transcription</keyword>
<keyword id="KW-0805">Transcription regulation</keyword>
<proteinExistence type="inferred from homology"/>
<dbReference type="EMBL" id="CH478169">
    <property type="protein sequence ID" value="EAT33704.1"/>
    <property type="molecule type" value="Genomic_DNA"/>
</dbReference>
<dbReference type="SMR" id="Q16HH9"/>
<dbReference type="FunCoup" id="Q16HH9">
    <property type="interactions" value="1327"/>
</dbReference>
<dbReference type="STRING" id="7159.Q16HH9"/>
<dbReference type="PaxDb" id="7159-AAEL014021-PA"/>
<dbReference type="EnsemblMetazoa" id="AAEL014021-RA">
    <property type="protein sequence ID" value="AAEL014021-PA"/>
    <property type="gene ID" value="AAEL014021"/>
</dbReference>
<dbReference type="GeneID" id="5579145"/>
<dbReference type="KEGG" id="aag:5579145"/>
<dbReference type="CTD" id="9439"/>
<dbReference type="VEuPathDB" id="VectorBase:AAEL014021"/>
<dbReference type="eggNOG" id="KOG1883">
    <property type="taxonomic scope" value="Eukaryota"/>
</dbReference>
<dbReference type="HOGENOM" id="CLU_002773_0_0_1"/>
<dbReference type="InParanoid" id="Q16HH9"/>
<dbReference type="OMA" id="QKHQKQR"/>
<dbReference type="OrthoDB" id="9982951at2759"/>
<dbReference type="PhylomeDB" id="Q16HH9"/>
<dbReference type="Proteomes" id="UP000008820">
    <property type="component" value="Chromosome 2"/>
</dbReference>
<dbReference type="Proteomes" id="UP000682892">
    <property type="component" value="Unassembled WGS sequence"/>
</dbReference>
<dbReference type="GO" id="GO:0016592">
    <property type="term" value="C:mediator complex"/>
    <property type="evidence" value="ECO:0007669"/>
    <property type="project" value="TreeGrafter"/>
</dbReference>
<dbReference type="GO" id="GO:0005667">
    <property type="term" value="C:transcription regulator complex"/>
    <property type="evidence" value="ECO:0007669"/>
    <property type="project" value="TreeGrafter"/>
</dbReference>
<dbReference type="GO" id="GO:0010628">
    <property type="term" value="P:positive regulation of gene expression"/>
    <property type="evidence" value="ECO:0007669"/>
    <property type="project" value="TreeGrafter"/>
</dbReference>
<dbReference type="GO" id="GO:0006357">
    <property type="term" value="P:regulation of transcription by RNA polymerase II"/>
    <property type="evidence" value="ECO:0007669"/>
    <property type="project" value="TreeGrafter"/>
</dbReference>
<dbReference type="InterPro" id="IPR021629">
    <property type="entry name" value="Mediator_Med23"/>
</dbReference>
<dbReference type="PANTHER" id="PTHR12691">
    <property type="entry name" value="MEDIATOR OF RNA POLYMERASE II TRANSCRIPTION SUBUNIT 23"/>
    <property type="match status" value="1"/>
</dbReference>
<dbReference type="PANTHER" id="PTHR12691:SF10">
    <property type="entry name" value="MEDIATOR OF RNA POLYMERASE II TRANSCRIPTION SUBUNIT 23"/>
    <property type="match status" value="1"/>
</dbReference>
<dbReference type="Pfam" id="PF11573">
    <property type="entry name" value="Med23"/>
    <property type="match status" value="1"/>
</dbReference>
<name>MED23_AEDAE</name>